<feature type="chain" id="PRO_0000046307" description="Sodium/potassium-transporting ATPase subunit alpha-B">
    <location>
        <begin position="1"/>
        <end position="1004"/>
    </location>
</feature>
<feature type="transmembrane region" description="Helical" evidence="1">
    <location>
        <begin position="76"/>
        <end position="96"/>
    </location>
</feature>
<feature type="transmembrane region" description="Helical" evidence="1">
    <location>
        <begin position="110"/>
        <end position="126"/>
    </location>
</feature>
<feature type="transmembrane region" description="Helical" evidence="1">
    <location>
        <begin position="272"/>
        <end position="294"/>
    </location>
</feature>
<feature type="transmembrane region" description="Helical" evidence="1">
    <location>
        <begin position="301"/>
        <end position="329"/>
    </location>
</feature>
<feature type="transmembrane region" description="Helical" evidence="1">
    <location>
        <begin position="768"/>
        <end position="791"/>
    </location>
</feature>
<feature type="transmembrane region" description="Helical" evidence="1">
    <location>
        <begin position="828"/>
        <end position="855"/>
    </location>
</feature>
<feature type="transmembrane region" description="Helical" evidence="1">
    <location>
        <begin position="897"/>
        <end position="918"/>
    </location>
</feature>
<feature type="transmembrane region" description="Helical" evidence="1">
    <location>
        <begin position="934"/>
        <end position="959"/>
    </location>
</feature>
<feature type="region of interest" description="Disordered" evidence="2">
    <location>
        <begin position="197"/>
        <end position="216"/>
    </location>
</feature>
<feature type="active site" description="4-aspartylphosphate intermediate" evidence="3">
    <location>
        <position position="357"/>
    </location>
</feature>
<feature type="binding site" evidence="1">
    <location>
        <position position="489"/>
    </location>
    <ligand>
        <name>ATP</name>
        <dbReference type="ChEBI" id="CHEBI:30616"/>
    </ligand>
</feature>
<feature type="binding site" evidence="1">
    <location>
        <position position="698"/>
    </location>
    <ligand>
        <name>Mg(2+)</name>
        <dbReference type="ChEBI" id="CHEBI:18420"/>
    </ligand>
</feature>
<feature type="binding site" evidence="1">
    <location>
        <position position="702"/>
    </location>
    <ligand>
        <name>Mg(2+)</name>
        <dbReference type="ChEBI" id="CHEBI:18420"/>
    </ligand>
</feature>
<reference key="1">
    <citation type="journal article" date="1991" name="Gene">
        <title>Cloning of a cDNA encoding an Artemia franciscana Na/K ATPase alpha-subunit.</title>
        <authorList>
            <person name="Macias M.T."/>
            <person name="Martinez J.L."/>
            <person name="Palmero I."/>
            <person name="Sastre L."/>
        </authorList>
    </citation>
    <scope>NUCLEOTIDE SEQUENCE [MRNA]</scope>
</reference>
<comment type="function">
    <text>This is the catalytic component of the active enzyme, which catalyzes the hydrolysis of ATP coupled with the exchange of sodium and potassium ions across the plasma membrane. This action creates the electrochemical gradient of sodium and potassium ions, providing the energy for active transport of various nutrients.</text>
</comment>
<comment type="catalytic activity">
    <reaction>
        <text>K(+)(out) + Na(+)(in) + ATP + H2O = K(+)(in) + Na(+)(out) + ADP + phosphate + H(+)</text>
        <dbReference type="Rhea" id="RHEA:18353"/>
        <dbReference type="ChEBI" id="CHEBI:15377"/>
        <dbReference type="ChEBI" id="CHEBI:15378"/>
        <dbReference type="ChEBI" id="CHEBI:29101"/>
        <dbReference type="ChEBI" id="CHEBI:29103"/>
        <dbReference type="ChEBI" id="CHEBI:30616"/>
        <dbReference type="ChEBI" id="CHEBI:43474"/>
        <dbReference type="ChEBI" id="CHEBI:456216"/>
        <dbReference type="EC" id="7.2.2.13"/>
    </reaction>
</comment>
<comment type="subunit">
    <text evidence="3">The sodium/potassium-transporting ATPase is composed of a catalytic alpha subunit, an auxiliary non-catalytic beta subunit and an additional regulatory subunit.</text>
</comment>
<comment type="subcellular location">
    <subcellularLocation>
        <location evidence="3">Cell membrane</location>
        <topology>Multi-pass membrane protein</topology>
    </subcellularLocation>
</comment>
<comment type="similarity">
    <text evidence="3">Belongs to the cation transport ATPase (P-type) (TC 3.A.3) family. Type IIC subfamily.</text>
</comment>
<protein>
    <recommendedName>
        <fullName>Sodium/potassium-transporting ATPase subunit alpha-B</fullName>
        <shortName>Na(+)/K(+) ATPase alpha-B subunit</shortName>
        <ecNumber>7.2.2.13</ecNumber>
    </recommendedName>
    <alternativeName>
        <fullName>Sodium pump subunit alpha-B</fullName>
    </alternativeName>
</protein>
<keyword id="KW-0067">ATP-binding</keyword>
<keyword id="KW-1003">Cell membrane</keyword>
<keyword id="KW-0406">Ion transport</keyword>
<keyword id="KW-0460">Magnesium</keyword>
<keyword id="KW-0472">Membrane</keyword>
<keyword id="KW-0479">Metal-binding</keyword>
<keyword id="KW-0547">Nucleotide-binding</keyword>
<keyword id="KW-0597">Phosphoprotein</keyword>
<keyword id="KW-0630">Potassium</keyword>
<keyword id="KW-0633">Potassium transport</keyword>
<keyword id="KW-0915">Sodium</keyword>
<keyword id="KW-0739">Sodium transport</keyword>
<keyword id="KW-0740">Sodium/potassium transport</keyword>
<keyword id="KW-1278">Translocase</keyword>
<keyword id="KW-0812">Transmembrane</keyword>
<keyword id="KW-1133">Transmembrane helix</keyword>
<keyword id="KW-0813">Transport</keyword>
<accession>P28774</accession>
<dbReference type="EC" id="7.2.2.13"/>
<dbReference type="EMBL" id="X56650">
    <property type="protein sequence ID" value="CAA39972.1"/>
    <property type="molecule type" value="mRNA"/>
</dbReference>
<dbReference type="PIR" id="JH0470">
    <property type="entry name" value="JH0470"/>
</dbReference>
<dbReference type="SMR" id="P28774"/>
<dbReference type="GO" id="GO:0005886">
    <property type="term" value="C:plasma membrane"/>
    <property type="evidence" value="ECO:0007669"/>
    <property type="project" value="UniProtKB-SubCell"/>
</dbReference>
<dbReference type="GO" id="GO:0005524">
    <property type="term" value="F:ATP binding"/>
    <property type="evidence" value="ECO:0007669"/>
    <property type="project" value="UniProtKB-KW"/>
</dbReference>
<dbReference type="GO" id="GO:0016887">
    <property type="term" value="F:ATP hydrolysis activity"/>
    <property type="evidence" value="ECO:0007669"/>
    <property type="project" value="InterPro"/>
</dbReference>
<dbReference type="GO" id="GO:0046872">
    <property type="term" value="F:metal ion binding"/>
    <property type="evidence" value="ECO:0007669"/>
    <property type="project" value="UniProtKB-KW"/>
</dbReference>
<dbReference type="GO" id="GO:0005391">
    <property type="term" value="F:P-type sodium:potassium-exchanging transporter activity"/>
    <property type="evidence" value="ECO:0007669"/>
    <property type="project" value="UniProtKB-EC"/>
</dbReference>
<dbReference type="GO" id="GO:0030007">
    <property type="term" value="P:intracellular potassium ion homeostasis"/>
    <property type="evidence" value="ECO:0007669"/>
    <property type="project" value="TreeGrafter"/>
</dbReference>
<dbReference type="GO" id="GO:0006883">
    <property type="term" value="P:intracellular sodium ion homeostasis"/>
    <property type="evidence" value="ECO:0007669"/>
    <property type="project" value="TreeGrafter"/>
</dbReference>
<dbReference type="GO" id="GO:1990573">
    <property type="term" value="P:potassium ion import across plasma membrane"/>
    <property type="evidence" value="ECO:0007669"/>
    <property type="project" value="TreeGrafter"/>
</dbReference>
<dbReference type="GO" id="GO:1902600">
    <property type="term" value="P:proton transmembrane transport"/>
    <property type="evidence" value="ECO:0007669"/>
    <property type="project" value="TreeGrafter"/>
</dbReference>
<dbReference type="GO" id="GO:0036376">
    <property type="term" value="P:sodium ion export across plasma membrane"/>
    <property type="evidence" value="ECO:0007669"/>
    <property type="project" value="TreeGrafter"/>
</dbReference>
<dbReference type="CDD" id="cd02608">
    <property type="entry name" value="P-type_ATPase_Na-K_like"/>
    <property type="match status" value="1"/>
</dbReference>
<dbReference type="FunFam" id="2.70.150.10:FF:000003">
    <property type="entry name" value="Sodium/potassium-transporting ATPase subunit alpha"/>
    <property type="match status" value="1"/>
</dbReference>
<dbReference type="FunFam" id="3.40.1110.10:FF:000001">
    <property type="entry name" value="Sodium/potassium-transporting ATPase subunit alpha"/>
    <property type="match status" value="1"/>
</dbReference>
<dbReference type="FunFam" id="3.40.50.1000:FF:000004">
    <property type="entry name" value="Sodium/potassium-transporting ATPase subunit alpha"/>
    <property type="match status" value="1"/>
</dbReference>
<dbReference type="FunFam" id="1.20.1110.10:FF:000095">
    <property type="entry name" value="Sodium/potassium-transporting ATPase subunit alpha-1"/>
    <property type="match status" value="2"/>
</dbReference>
<dbReference type="Gene3D" id="3.40.1110.10">
    <property type="entry name" value="Calcium-transporting ATPase, cytoplasmic domain N"/>
    <property type="match status" value="1"/>
</dbReference>
<dbReference type="Gene3D" id="2.70.150.10">
    <property type="entry name" value="Calcium-transporting ATPase, cytoplasmic transduction domain A"/>
    <property type="match status" value="1"/>
</dbReference>
<dbReference type="Gene3D" id="1.20.1110.10">
    <property type="entry name" value="Calcium-transporting ATPase, transmembrane domain"/>
    <property type="match status" value="1"/>
</dbReference>
<dbReference type="Gene3D" id="3.40.50.1000">
    <property type="entry name" value="HAD superfamily/HAD-like"/>
    <property type="match status" value="1"/>
</dbReference>
<dbReference type="InterPro" id="IPR006068">
    <property type="entry name" value="ATPase_P-typ_cation-transptr_C"/>
</dbReference>
<dbReference type="InterPro" id="IPR004014">
    <property type="entry name" value="ATPase_P-typ_cation-transptr_N"/>
</dbReference>
<dbReference type="InterPro" id="IPR023299">
    <property type="entry name" value="ATPase_P-typ_cyto_dom_N"/>
</dbReference>
<dbReference type="InterPro" id="IPR018303">
    <property type="entry name" value="ATPase_P-typ_P_site"/>
</dbReference>
<dbReference type="InterPro" id="IPR023298">
    <property type="entry name" value="ATPase_P-typ_TM_dom_sf"/>
</dbReference>
<dbReference type="InterPro" id="IPR008250">
    <property type="entry name" value="ATPase_P-typ_transduc_dom_A_sf"/>
</dbReference>
<dbReference type="InterPro" id="IPR050510">
    <property type="entry name" value="Cation_transp_ATPase_P-type"/>
</dbReference>
<dbReference type="InterPro" id="IPR036412">
    <property type="entry name" value="HAD-like_sf"/>
</dbReference>
<dbReference type="InterPro" id="IPR023214">
    <property type="entry name" value="HAD_sf"/>
</dbReference>
<dbReference type="InterPro" id="IPR005775">
    <property type="entry name" value="P-type_ATPase_IIC"/>
</dbReference>
<dbReference type="InterPro" id="IPR001757">
    <property type="entry name" value="P_typ_ATPase"/>
</dbReference>
<dbReference type="InterPro" id="IPR044492">
    <property type="entry name" value="P_typ_ATPase_HD_dom"/>
</dbReference>
<dbReference type="NCBIfam" id="TIGR01106">
    <property type="entry name" value="ATPase-IIC_X-K"/>
    <property type="match status" value="1"/>
</dbReference>
<dbReference type="NCBIfam" id="TIGR01494">
    <property type="entry name" value="ATPase_P-type"/>
    <property type="match status" value="2"/>
</dbReference>
<dbReference type="PANTHER" id="PTHR43294">
    <property type="entry name" value="SODIUM/POTASSIUM-TRANSPORTING ATPASE SUBUNIT ALPHA"/>
    <property type="match status" value="1"/>
</dbReference>
<dbReference type="PANTHER" id="PTHR43294:SF13">
    <property type="entry name" value="SODIUM_POTASSIUM-TRANSPORTING ATPASE SUBUNIT ALPHA"/>
    <property type="match status" value="1"/>
</dbReference>
<dbReference type="Pfam" id="PF13246">
    <property type="entry name" value="Cation_ATPase"/>
    <property type="match status" value="1"/>
</dbReference>
<dbReference type="Pfam" id="PF00689">
    <property type="entry name" value="Cation_ATPase_C"/>
    <property type="match status" value="1"/>
</dbReference>
<dbReference type="Pfam" id="PF00690">
    <property type="entry name" value="Cation_ATPase_N"/>
    <property type="match status" value="1"/>
</dbReference>
<dbReference type="Pfam" id="PF00122">
    <property type="entry name" value="E1-E2_ATPase"/>
    <property type="match status" value="1"/>
</dbReference>
<dbReference type="PRINTS" id="PR00119">
    <property type="entry name" value="CATATPASE"/>
</dbReference>
<dbReference type="PRINTS" id="PR00121">
    <property type="entry name" value="NAKATPASE"/>
</dbReference>
<dbReference type="SFLD" id="SFLDS00003">
    <property type="entry name" value="Haloacid_Dehalogenase"/>
    <property type="match status" value="1"/>
</dbReference>
<dbReference type="SFLD" id="SFLDF00027">
    <property type="entry name" value="p-type_atpase"/>
    <property type="match status" value="1"/>
</dbReference>
<dbReference type="SMART" id="SM00831">
    <property type="entry name" value="Cation_ATPase_N"/>
    <property type="match status" value="1"/>
</dbReference>
<dbReference type="SUPFAM" id="SSF81653">
    <property type="entry name" value="Calcium ATPase, transduction domain A"/>
    <property type="match status" value="1"/>
</dbReference>
<dbReference type="SUPFAM" id="SSF81665">
    <property type="entry name" value="Calcium ATPase, transmembrane domain M"/>
    <property type="match status" value="1"/>
</dbReference>
<dbReference type="SUPFAM" id="SSF56784">
    <property type="entry name" value="HAD-like"/>
    <property type="match status" value="1"/>
</dbReference>
<dbReference type="SUPFAM" id="SSF81660">
    <property type="entry name" value="Metal cation-transporting ATPase, ATP-binding domain N"/>
    <property type="match status" value="1"/>
</dbReference>
<dbReference type="PROSITE" id="PS00154">
    <property type="entry name" value="ATPASE_E1_E2"/>
    <property type="match status" value="1"/>
</dbReference>
<sequence length="1004" mass="110699">MAKGKQKKGKDLNELKKELDIDFHKIPIEECYQRLGSNPETGLTNAQARSNIERDGPNCLTPPKTTPEWIKFCKNLFGGFALLLWTGAILCFLAYGIEASSGNEDMLKDNLYLGIVLATVVIVTGIFSYYQENKSSRIMDSFKNLVPQYALALREGQRVTLKAEELTMGDIVEVKFGDRVPADLRVLEARSFKVDNSSLTGESEPQARSPEFTNDNPLETKNLAFFSTNAVEGTMRGIVIGIGDNTVMGRIAGLASGLDTGETPIAKEIAHFIHIITGVAVFLGVTFFIIAFVLGYHWLDAVVFLIGIIVANVPEGLLATVTVCLTLTAKRMASKNCLVKNLEAVETLGSTSTICSDKTGTLTQNRMTVAHMWFDGTITEADTTEDQSGAQFDKSSAGWKALVKIAALCSRAEFKPNQSTTPILKREVTGDASEAAILKCVELTTGETEAIRKRNKKICEIPFNSANKFQVSIHENEDKSDGRYLLVMKGAPERILERCSTIFMNGKEIDMTEELKEAFNNAYMELGGLGERVLGFCDYLLPLDKYPHGFAFNADDANFPLTGLRFAGLMSMIDPPRAAVPDAVAKCRSAGIKVIMVTGDHPITAKAIAKSVGIISEGNETVEDIAARLNIPVSEVNPRDAKAAVVHGGELRDITPDALDEILRHHPEIVFARTSPQQKLIIVEGCQRQGAIVAVTGDGVNDSPALKKADIGVAMGIAGSDVSKQAADMILLDDNFASIVTGVEEGRLIFDNLKKSIVYTLTSNIPEISPFLLFILFDIPLPLGTVTILCIDLGTDMVPAISLAYEEAESDIMKRRPRNPVTDKLVNERLISLAYGQIGMIQASAGFFVYFVIMAECGFLPWDLFGLRKHWDSRAVNDLTDSYGQEWTYDARKQLESSCHTAYFVSIVIVQWADLIISKTRRNSVFQQGMRNNILNFALVFETCLAAFLSYTPGMDKGLRMYPLKINWWFPALPFSFLIFVYDEARKFILRRNPGGWVEQETYY</sequence>
<evidence type="ECO:0000250" key="1"/>
<evidence type="ECO:0000256" key="2">
    <source>
        <dbReference type="SAM" id="MobiDB-lite"/>
    </source>
</evidence>
<evidence type="ECO:0000305" key="3"/>
<name>AT1B_ARTSF</name>
<organism>
    <name type="scientific">Artemia franciscana</name>
    <name type="common">Brine shrimp</name>
    <name type="synonym">Artemia sanfranciscana</name>
    <dbReference type="NCBI Taxonomy" id="6661"/>
    <lineage>
        <taxon>Eukaryota</taxon>
        <taxon>Metazoa</taxon>
        <taxon>Ecdysozoa</taxon>
        <taxon>Arthropoda</taxon>
        <taxon>Crustacea</taxon>
        <taxon>Branchiopoda</taxon>
        <taxon>Anostraca</taxon>
        <taxon>Artemiidae</taxon>
        <taxon>Artemia</taxon>
    </lineage>
</organism>
<proteinExistence type="evidence at transcript level"/>